<dbReference type="EMBL" id="DP000087">
    <property type="protein sequence ID" value="ABG66644.1"/>
    <property type="molecule type" value="Genomic_DNA"/>
</dbReference>
<dbReference type="RefSeq" id="XP_010585673.1">
    <property type="nucleotide sequence ID" value="XM_010587371.3"/>
</dbReference>
<dbReference type="FunCoup" id="Q108U8">
    <property type="interactions" value="59"/>
</dbReference>
<dbReference type="STRING" id="9785.ENSLAFP00000012610"/>
<dbReference type="Ensembl" id="ENSLAFT00000015060.2">
    <property type="protein sequence ID" value="ENSLAFP00000012610.2"/>
    <property type="gene ID" value="ENSLAFG00000015065.2"/>
</dbReference>
<dbReference type="GeneID" id="100655716"/>
<dbReference type="KEGG" id="lav:100655716"/>
<dbReference type="CTD" id="858"/>
<dbReference type="eggNOG" id="ENOG502RZYX">
    <property type="taxonomic scope" value="Eukaryota"/>
</dbReference>
<dbReference type="GeneTree" id="ENSGT00950000183006"/>
<dbReference type="HOGENOM" id="CLU_102582_2_0_1"/>
<dbReference type="InParanoid" id="Q108U8"/>
<dbReference type="OMA" id="TRIFMDD"/>
<dbReference type="OrthoDB" id="5917823at2759"/>
<dbReference type="TreeFam" id="TF315736"/>
<dbReference type="Proteomes" id="UP000007646">
    <property type="component" value="Unassembled WGS sequence"/>
</dbReference>
<dbReference type="GO" id="GO:0002080">
    <property type="term" value="C:acrosomal membrane"/>
    <property type="evidence" value="ECO:0007669"/>
    <property type="project" value="Ensembl"/>
</dbReference>
<dbReference type="GO" id="GO:0005901">
    <property type="term" value="C:caveola"/>
    <property type="evidence" value="ECO:0000250"/>
    <property type="project" value="UniProtKB"/>
</dbReference>
<dbReference type="GO" id="GO:0002095">
    <property type="term" value="C:caveolar macromolecular signaling complex"/>
    <property type="evidence" value="ECO:0007669"/>
    <property type="project" value="Ensembl"/>
</dbReference>
<dbReference type="GO" id="GO:0005925">
    <property type="term" value="C:focal adhesion"/>
    <property type="evidence" value="ECO:0007669"/>
    <property type="project" value="Ensembl"/>
</dbReference>
<dbReference type="GO" id="GO:0000139">
    <property type="term" value="C:Golgi membrane"/>
    <property type="evidence" value="ECO:0007669"/>
    <property type="project" value="UniProtKB-SubCell"/>
</dbReference>
<dbReference type="GO" id="GO:0005634">
    <property type="term" value="C:nucleus"/>
    <property type="evidence" value="ECO:0007669"/>
    <property type="project" value="UniProtKB-SubCell"/>
</dbReference>
<dbReference type="GO" id="GO:0048471">
    <property type="term" value="C:perinuclear region of cytoplasm"/>
    <property type="evidence" value="ECO:0000250"/>
    <property type="project" value="UniProtKB"/>
</dbReference>
<dbReference type="GO" id="GO:0044853">
    <property type="term" value="C:plasma membrane raft"/>
    <property type="evidence" value="ECO:0000250"/>
    <property type="project" value="UniProtKB"/>
</dbReference>
<dbReference type="GO" id="GO:0042383">
    <property type="term" value="C:sarcolemma"/>
    <property type="evidence" value="ECO:0007669"/>
    <property type="project" value="TreeGrafter"/>
</dbReference>
<dbReference type="GO" id="GO:0030133">
    <property type="term" value="C:transport vesicle"/>
    <property type="evidence" value="ECO:0007669"/>
    <property type="project" value="Ensembl"/>
</dbReference>
<dbReference type="GO" id="GO:0031748">
    <property type="term" value="F:D1 dopamine receptor binding"/>
    <property type="evidence" value="ECO:0000250"/>
    <property type="project" value="UniProtKB"/>
</dbReference>
<dbReference type="GO" id="GO:0046982">
    <property type="term" value="F:protein heterodimerization activity"/>
    <property type="evidence" value="ECO:0007669"/>
    <property type="project" value="Ensembl"/>
</dbReference>
<dbReference type="GO" id="GO:0042803">
    <property type="term" value="F:protein homodimerization activity"/>
    <property type="evidence" value="ECO:0007669"/>
    <property type="project" value="Ensembl"/>
</dbReference>
<dbReference type="GO" id="GO:0019901">
    <property type="term" value="F:protein kinase binding"/>
    <property type="evidence" value="ECO:0007669"/>
    <property type="project" value="Ensembl"/>
</dbReference>
<dbReference type="GO" id="GO:0030674">
    <property type="term" value="F:protein-macromolecule adaptor activity"/>
    <property type="evidence" value="ECO:0007669"/>
    <property type="project" value="Ensembl"/>
</dbReference>
<dbReference type="GO" id="GO:0097110">
    <property type="term" value="F:scaffold protein binding"/>
    <property type="evidence" value="ECO:0007669"/>
    <property type="project" value="Ensembl"/>
</dbReference>
<dbReference type="GO" id="GO:0071711">
    <property type="term" value="P:basement membrane organization"/>
    <property type="evidence" value="ECO:0007669"/>
    <property type="project" value="Ensembl"/>
</dbReference>
<dbReference type="GO" id="GO:0070836">
    <property type="term" value="P:caveola assembly"/>
    <property type="evidence" value="ECO:0000250"/>
    <property type="project" value="UniProtKB"/>
</dbReference>
<dbReference type="GO" id="GO:0007029">
    <property type="term" value="P:endoplasmic reticulum organization"/>
    <property type="evidence" value="ECO:0000250"/>
    <property type="project" value="UniProtKB"/>
</dbReference>
<dbReference type="GO" id="GO:0001935">
    <property type="term" value="P:endothelial cell proliferation"/>
    <property type="evidence" value="ECO:0007669"/>
    <property type="project" value="Ensembl"/>
</dbReference>
<dbReference type="GO" id="GO:0008286">
    <property type="term" value="P:insulin receptor signaling pathway"/>
    <property type="evidence" value="ECO:0007669"/>
    <property type="project" value="Ensembl"/>
</dbReference>
<dbReference type="GO" id="GO:0007005">
    <property type="term" value="P:mitochondrion organization"/>
    <property type="evidence" value="ECO:0000250"/>
    <property type="project" value="UniProtKB"/>
</dbReference>
<dbReference type="GO" id="GO:0001937">
    <property type="term" value="P:negative regulation of endothelial cell proliferation"/>
    <property type="evidence" value="ECO:0000250"/>
    <property type="project" value="UniProtKB"/>
</dbReference>
<dbReference type="GO" id="GO:0014859">
    <property type="term" value="P:negative regulation of skeletal muscle cell proliferation"/>
    <property type="evidence" value="ECO:0007669"/>
    <property type="project" value="Ensembl"/>
</dbReference>
<dbReference type="GO" id="GO:0030512">
    <property type="term" value="P:negative regulation of transforming growth factor beta receptor signaling pathway"/>
    <property type="evidence" value="ECO:0007669"/>
    <property type="project" value="Ensembl"/>
</dbReference>
<dbReference type="GO" id="GO:0044794">
    <property type="term" value="P:positive regulation by host of viral process"/>
    <property type="evidence" value="ECO:0007669"/>
    <property type="project" value="Ensembl"/>
</dbReference>
<dbReference type="GO" id="GO:0060161">
    <property type="term" value="P:positive regulation of dopamine receptor signaling pathway"/>
    <property type="evidence" value="ECO:0000250"/>
    <property type="project" value="UniProtKB"/>
</dbReference>
<dbReference type="GO" id="GO:0001938">
    <property type="term" value="P:positive regulation of endothelial cell proliferation"/>
    <property type="evidence" value="ECO:0007669"/>
    <property type="project" value="Ensembl"/>
</dbReference>
<dbReference type="GO" id="GO:0043410">
    <property type="term" value="P:positive regulation of MAPK cascade"/>
    <property type="evidence" value="ECO:0007669"/>
    <property type="project" value="Ensembl"/>
</dbReference>
<dbReference type="GO" id="GO:0019065">
    <property type="term" value="P:receptor-mediated endocytosis of virus by host cell"/>
    <property type="evidence" value="ECO:0007669"/>
    <property type="project" value="Ensembl"/>
</dbReference>
<dbReference type="GO" id="GO:0051480">
    <property type="term" value="P:regulation of cytosolic calcium ion concentration"/>
    <property type="evidence" value="ECO:0007669"/>
    <property type="project" value="TreeGrafter"/>
</dbReference>
<dbReference type="GO" id="GO:0007088">
    <property type="term" value="P:regulation of mitotic nuclear division"/>
    <property type="evidence" value="ECO:0007669"/>
    <property type="project" value="Ensembl"/>
</dbReference>
<dbReference type="GO" id="GO:0014856">
    <property type="term" value="P:skeletal muscle cell proliferation"/>
    <property type="evidence" value="ECO:0007669"/>
    <property type="project" value="Ensembl"/>
</dbReference>
<dbReference type="GO" id="GO:0048741">
    <property type="term" value="P:skeletal muscle fiber development"/>
    <property type="evidence" value="ECO:0000250"/>
    <property type="project" value="UniProtKB"/>
</dbReference>
<dbReference type="GO" id="GO:0007179">
    <property type="term" value="P:transforming growth factor beta receptor signaling pathway"/>
    <property type="evidence" value="ECO:0007669"/>
    <property type="project" value="Ensembl"/>
</dbReference>
<dbReference type="GO" id="GO:0048278">
    <property type="term" value="P:vesicle docking"/>
    <property type="evidence" value="ECO:0000250"/>
    <property type="project" value="UniProtKB"/>
</dbReference>
<dbReference type="GO" id="GO:0006906">
    <property type="term" value="P:vesicle fusion"/>
    <property type="evidence" value="ECO:0000250"/>
    <property type="project" value="UniProtKB"/>
</dbReference>
<dbReference type="GO" id="GO:0019076">
    <property type="term" value="P:viral release from host cell"/>
    <property type="evidence" value="ECO:0007669"/>
    <property type="project" value="Ensembl"/>
</dbReference>
<dbReference type="InterPro" id="IPR001612">
    <property type="entry name" value="Caveolin"/>
</dbReference>
<dbReference type="PANTHER" id="PTHR10844">
    <property type="entry name" value="CAVEOLIN"/>
    <property type="match status" value="1"/>
</dbReference>
<dbReference type="PANTHER" id="PTHR10844:SF3">
    <property type="entry name" value="CAVEOLIN-2"/>
    <property type="match status" value="1"/>
</dbReference>
<dbReference type="Pfam" id="PF01146">
    <property type="entry name" value="Caveolin"/>
    <property type="match status" value="1"/>
</dbReference>
<feature type="chain" id="PRO_0000250459" description="Caveolin-2">
    <location>
        <begin position="1"/>
        <end position="162"/>
    </location>
</feature>
<feature type="topological domain" description="Cytoplasmic" evidence="4">
    <location>
        <begin position="1"/>
        <end position="86"/>
    </location>
</feature>
<feature type="intramembrane region" description="Helical" evidence="4">
    <location>
        <begin position="87"/>
        <end position="107"/>
    </location>
</feature>
<feature type="topological domain" description="Cytoplasmic" evidence="4">
    <location>
        <begin position="108"/>
        <end position="162"/>
    </location>
</feature>
<feature type="modified residue" description="Phosphotyrosine; by SRC" evidence="2">
    <location>
        <position position="19"/>
    </location>
</feature>
<feature type="modified residue" description="Phosphoserine" evidence="3">
    <location>
        <position position="20"/>
    </location>
</feature>
<feature type="modified residue" description="Phosphoserine" evidence="2">
    <location>
        <position position="23"/>
    </location>
</feature>
<feature type="modified residue" description="Phosphotyrosine; by SRC" evidence="2">
    <location>
        <position position="27"/>
    </location>
</feature>
<feature type="modified residue" description="Phosphoserine" evidence="2">
    <location>
        <position position="36"/>
    </location>
</feature>
<evidence type="ECO:0000250" key="1"/>
<evidence type="ECO:0000250" key="2">
    <source>
        <dbReference type="UniProtKB" id="P51636"/>
    </source>
</evidence>
<evidence type="ECO:0000250" key="3">
    <source>
        <dbReference type="UniProtKB" id="Q9WVC3"/>
    </source>
</evidence>
<evidence type="ECO:0000255" key="4"/>
<evidence type="ECO:0000305" key="5"/>
<keyword id="KW-1003">Cell membrane</keyword>
<keyword id="KW-0963">Cytoplasm</keyword>
<keyword id="KW-0333">Golgi apparatus</keyword>
<keyword id="KW-0472">Membrane</keyword>
<keyword id="KW-0539">Nucleus</keyword>
<keyword id="KW-0597">Phosphoprotein</keyword>
<keyword id="KW-1185">Reference proteome</keyword>
<proteinExistence type="inferred from homology"/>
<protein>
    <recommendedName>
        <fullName>Caveolin-2</fullName>
    </recommendedName>
</protein>
<reference key="1">
    <citation type="submission" date="2006-07" db="EMBL/GenBank/DDBJ databases">
        <title>NISC comparative sequencing initiative.</title>
        <authorList>
            <person name="Antonellis A."/>
            <person name="Ayele K."/>
            <person name="Benjamin B."/>
            <person name="Blakesley R.W."/>
            <person name="Boakye A."/>
            <person name="Bouffard G.G."/>
            <person name="Brinkley C."/>
            <person name="Brooks S."/>
            <person name="Chu G."/>
            <person name="Coleman H."/>
            <person name="Engle J."/>
            <person name="Gestole M."/>
            <person name="Greene A."/>
            <person name="Guan X."/>
            <person name="Gupta J."/>
            <person name="Haghighi P."/>
            <person name="Han J."/>
            <person name="Hansen N."/>
            <person name="Ho S.-L."/>
            <person name="Hu P."/>
            <person name="Hunter G."/>
            <person name="Hurle B."/>
            <person name="Idol J.R."/>
            <person name="Kwong P."/>
            <person name="Laric P."/>
            <person name="Larson S."/>
            <person name="Lee-Lin S.-Q."/>
            <person name="Legaspi R."/>
            <person name="Madden M."/>
            <person name="Maduro Q.L."/>
            <person name="Maduro V.B."/>
            <person name="Margulies E.H."/>
            <person name="Masiello C."/>
            <person name="Maskeri B."/>
            <person name="McDowell J."/>
            <person name="Mojidi H.A."/>
            <person name="Mullikin J.C."/>
            <person name="Oestreicher J.S."/>
            <person name="Park M."/>
            <person name="Portnoy M.E."/>
            <person name="Prasad A."/>
            <person name="Puri O."/>
            <person name="Reddix-Dugue N."/>
            <person name="Schandler K."/>
            <person name="Schueler M.G."/>
            <person name="Sison C."/>
            <person name="Stantripop S."/>
            <person name="Stephen E."/>
            <person name="Taye A."/>
            <person name="Thomas J.W."/>
            <person name="Thomas P.J."/>
            <person name="Tsipouri V."/>
            <person name="Ung L."/>
            <person name="Vogt J.L."/>
            <person name="Wetherby K.D."/>
            <person name="Young A."/>
            <person name="Green E.D."/>
        </authorList>
    </citation>
    <scope>NUCLEOTIDE SEQUENCE [LARGE SCALE GENOMIC DNA]</scope>
</reference>
<sequence>MGLETEKADVQLFMDDDAYSRHSGVDYADPEKFGGSGPDRDPHRLNSHLQLGFEDVVAEPVSTHSFDKVWICSHALFEISKYVVYKFLTVFLAIPLAFAAGILFATLSCLHIWIIMPFVKTCLMVLPSVQTVWKTVTDVVIAPLCASVGRSFSSVSLQLSHD</sequence>
<comment type="function">
    <text evidence="1">May act as a scaffolding protein within caveolar membranes. Interacts directly with G-protein alpha subunits and can functionally regulate their activity. Acts as an accessory protein in conjunction with CAV1 in targeting to lipid rafts and driving caveolae formation. The Ser-36 phosphorylated form has a role in modulating mitosis in endothelial cells. Positive regulator of cellular mitogenesis of the MAPK signaling pathway. Required for the insulin-stimulated nuclear translocation and activation of MAPK1 and STAT3, and the subsequent regulation of cell cycle progression (By similarity).</text>
</comment>
<comment type="subunit">
    <text evidence="1">Monomer or homodimer (By similarity). Interacts with CAV1; the interaction forms a stable heterooligomeric complex that is required for targeting to lipid rafts and for caveolae formation. Tyrosine phosphorylated forms do not form heterooligomers with the Tyr-19-phosphorylated form existing as a monomer or dimer, and the Tyr-27-form as a monomer only. Interacts (tyrosine phosphorylated form) with the SH2 domain-containing proteins, RASA1, NCK1 and SRC. Interacts (tyrosine phosphorylated form) with INSR, the interaction (Tyr-27-phosphorylated form) is increased on insulin stimulation. Interacts (Tyr-19 phosphorylated form) with MAPK1 (phosphorylated form); the interaction, promoted by insulin, leads to nuclear location and MAPK1 activation. Interacts with STAT3; the interaction is increased on insulin-induced tyrosine phosphorylation leading to STAT activation (By similarity).</text>
</comment>
<comment type="subcellular location">
    <subcellularLocation>
        <location evidence="1">Nucleus</location>
    </subcellularLocation>
    <subcellularLocation>
        <location evidence="1">Cytoplasm</location>
    </subcellularLocation>
    <subcellularLocation>
        <location>Golgi apparatus membrane</location>
        <topology>Peripheral membrane protein</topology>
    </subcellularLocation>
    <subcellularLocation>
        <location>Cell membrane</location>
        <topology>Peripheral membrane protein</topology>
    </subcellularLocation>
    <subcellularLocation>
        <location>Membrane</location>
        <location>Caveola</location>
        <topology>Peripheral membrane protein</topology>
    </subcellularLocation>
    <text evidence="1">Potential hairpin-like structure in the membrane. Membrane protein of caveolae. Tyr-19-phosphorylated form is enriched at sites of cell-cell contact and is translocated to the nucleus in complex with MAPK1 in response to insulin (By similarity). Tyr-27-phosphorylated form is located both in the cytoplasm and plasma membrane. CAV1-mediated Ser-23-phosphorylated form locates to the plasma membrane. Ser-36-phosphorylated form resides in intracellular compartments.</text>
</comment>
<comment type="PTM">
    <text evidence="1">Phosphorylated on serine and tyrosine residues. CAV1 promotes phosphorylation on Ser-23 which then targets the complex to the plasma membrane, lipid rafts and caveolae. Phosphorylation on Ser-36 appears to modulate mitosis in endothelial cells (By similarity). Phosphorylation on both Tyr-19 and Tyr-27 is required for insulin-induced 'Ser-727' phosphorylation of STAT3 and its activation. Phosphorylation on Tyr-19 is required for insulin-induced phosphorylation of MAPK1 and DNA binding of STAT3. Tyrosine phosphorylation is induced by both EGF and insulin (By. similarity).</text>
</comment>
<comment type="similarity">
    <text evidence="5">Belongs to the caveolin family.</text>
</comment>
<gene>
    <name type="primary">CAV2</name>
</gene>
<name>CAV2_LOXAF</name>
<organism>
    <name type="scientific">Loxodonta africana</name>
    <name type="common">African elephant</name>
    <dbReference type="NCBI Taxonomy" id="9785"/>
    <lineage>
        <taxon>Eukaryota</taxon>
        <taxon>Metazoa</taxon>
        <taxon>Chordata</taxon>
        <taxon>Craniata</taxon>
        <taxon>Vertebrata</taxon>
        <taxon>Euteleostomi</taxon>
        <taxon>Mammalia</taxon>
        <taxon>Eutheria</taxon>
        <taxon>Afrotheria</taxon>
        <taxon>Proboscidea</taxon>
        <taxon>Elephantidae</taxon>
        <taxon>Loxodonta</taxon>
    </lineage>
</organism>
<accession>Q108U8</accession>